<evidence type="ECO:0000255" key="1">
    <source>
        <dbReference type="HAMAP-Rule" id="MF_00044"/>
    </source>
</evidence>
<comment type="function">
    <text evidence="1">Aspartyl-tRNA synthetase with relaxed tRNA specificity since it is able to aspartylate not only its cognate tRNA(Asp) but also tRNA(Asn). Reaction proceeds in two steps: L-aspartate is first activated by ATP to form Asp-AMP and then transferred to the acceptor end of tRNA(Asp/Asn).</text>
</comment>
<comment type="catalytic activity">
    <reaction evidence="1">
        <text>tRNA(Asx) + L-aspartate + ATP = L-aspartyl-tRNA(Asx) + AMP + diphosphate</text>
        <dbReference type="Rhea" id="RHEA:18349"/>
        <dbReference type="Rhea" id="RHEA-COMP:9710"/>
        <dbReference type="Rhea" id="RHEA-COMP:9711"/>
        <dbReference type="ChEBI" id="CHEBI:29991"/>
        <dbReference type="ChEBI" id="CHEBI:30616"/>
        <dbReference type="ChEBI" id="CHEBI:33019"/>
        <dbReference type="ChEBI" id="CHEBI:78442"/>
        <dbReference type="ChEBI" id="CHEBI:78516"/>
        <dbReference type="ChEBI" id="CHEBI:456215"/>
        <dbReference type="EC" id="6.1.1.23"/>
    </reaction>
</comment>
<comment type="subunit">
    <text evidence="1">Homodimer.</text>
</comment>
<comment type="subcellular location">
    <subcellularLocation>
        <location evidence="1">Cytoplasm</location>
    </subcellularLocation>
</comment>
<comment type="similarity">
    <text evidence="1">Belongs to the class-II aminoacyl-tRNA synthetase family. Type 1 subfamily.</text>
</comment>
<protein>
    <recommendedName>
        <fullName evidence="1">Aspartate--tRNA(Asp/Asn) ligase</fullName>
        <ecNumber evidence="1">6.1.1.23</ecNumber>
    </recommendedName>
    <alternativeName>
        <fullName evidence="1">Aspartyl-tRNA synthetase</fullName>
        <shortName evidence="1">AspRS</shortName>
    </alternativeName>
    <alternativeName>
        <fullName evidence="1">Non-discriminating aspartyl-tRNA synthetase</fullName>
        <shortName evidence="1">ND-AspRS</shortName>
    </alternativeName>
</protein>
<dbReference type="EC" id="6.1.1.23" evidence="1"/>
<dbReference type="EMBL" id="CP000774">
    <property type="protein sequence ID" value="ABS64907.1"/>
    <property type="molecule type" value="Genomic_DNA"/>
</dbReference>
<dbReference type="RefSeq" id="WP_012112235.1">
    <property type="nucleotide sequence ID" value="NC_009719.1"/>
</dbReference>
<dbReference type="SMR" id="A7HYC4"/>
<dbReference type="STRING" id="402881.Plav_3302"/>
<dbReference type="KEGG" id="pla:Plav_3302"/>
<dbReference type="eggNOG" id="COG0173">
    <property type="taxonomic scope" value="Bacteria"/>
</dbReference>
<dbReference type="HOGENOM" id="CLU_014330_3_2_5"/>
<dbReference type="OrthoDB" id="9802326at2"/>
<dbReference type="Proteomes" id="UP000006377">
    <property type="component" value="Chromosome"/>
</dbReference>
<dbReference type="GO" id="GO:0005737">
    <property type="term" value="C:cytoplasm"/>
    <property type="evidence" value="ECO:0007669"/>
    <property type="project" value="UniProtKB-SubCell"/>
</dbReference>
<dbReference type="GO" id="GO:0004815">
    <property type="term" value="F:aspartate-tRNA ligase activity"/>
    <property type="evidence" value="ECO:0007669"/>
    <property type="project" value="UniProtKB-UniRule"/>
</dbReference>
<dbReference type="GO" id="GO:0050560">
    <property type="term" value="F:aspartate-tRNA(Asn) ligase activity"/>
    <property type="evidence" value="ECO:0007669"/>
    <property type="project" value="UniProtKB-EC"/>
</dbReference>
<dbReference type="GO" id="GO:0005524">
    <property type="term" value="F:ATP binding"/>
    <property type="evidence" value="ECO:0007669"/>
    <property type="project" value="UniProtKB-UniRule"/>
</dbReference>
<dbReference type="GO" id="GO:0003676">
    <property type="term" value="F:nucleic acid binding"/>
    <property type="evidence" value="ECO:0007669"/>
    <property type="project" value="InterPro"/>
</dbReference>
<dbReference type="GO" id="GO:0006422">
    <property type="term" value="P:aspartyl-tRNA aminoacylation"/>
    <property type="evidence" value="ECO:0007669"/>
    <property type="project" value="UniProtKB-UniRule"/>
</dbReference>
<dbReference type="CDD" id="cd00777">
    <property type="entry name" value="AspRS_core"/>
    <property type="match status" value="1"/>
</dbReference>
<dbReference type="CDD" id="cd04317">
    <property type="entry name" value="EcAspRS_like_N"/>
    <property type="match status" value="1"/>
</dbReference>
<dbReference type="Gene3D" id="3.30.930.10">
    <property type="entry name" value="Bira Bifunctional Protein, Domain 2"/>
    <property type="match status" value="1"/>
</dbReference>
<dbReference type="Gene3D" id="3.30.1360.30">
    <property type="entry name" value="GAD-like domain"/>
    <property type="match status" value="1"/>
</dbReference>
<dbReference type="Gene3D" id="2.40.50.140">
    <property type="entry name" value="Nucleic acid-binding proteins"/>
    <property type="match status" value="1"/>
</dbReference>
<dbReference type="HAMAP" id="MF_00044">
    <property type="entry name" value="Asp_tRNA_synth_type1"/>
    <property type="match status" value="1"/>
</dbReference>
<dbReference type="InterPro" id="IPR004364">
    <property type="entry name" value="Aa-tRNA-synt_II"/>
</dbReference>
<dbReference type="InterPro" id="IPR006195">
    <property type="entry name" value="aa-tRNA-synth_II"/>
</dbReference>
<dbReference type="InterPro" id="IPR045864">
    <property type="entry name" value="aa-tRNA-synth_II/BPL/LPL"/>
</dbReference>
<dbReference type="InterPro" id="IPR004524">
    <property type="entry name" value="Asp-tRNA-ligase_1"/>
</dbReference>
<dbReference type="InterPro" id="IPR047089">
    <property type="entry name" value="Asp-tRNA-ligase_1_N"/>
</dbReference>
<dbReference type="InterPro" id="IPR002312">
    <property type="entry name" value="Asp/Asn-tRNA-synth_IIb"/>
</dbReference>
<dbReference type="InterPro" id="IPR047090">
    <property type="entry name" value="AspRS_core"/>
</dbReference>
<dbReference type="InterPro" id="IPR004115">
    <property type="entry name" value="GAD-like_sf"/>
</dbReference>
<dbReference type="InterPro" id="IPR029351">
    <property type="entry name" value="GAD_dom"/>
</dbReference>
<dbReference type="InterPro" id="IPR012340">
    <property type="entry name" value="NA-bd_OB-fold"/>
</dbReference>
<dbReference type="InterPro" id="IPR004365">
    <property type="entry name" value="NA-bd_OB_tRNA"/>
</dbReference>
<dbReference type="NCBIfam" id="TIGR00459">
    <property type="entry name" value="aspS_bact"/>
    <property type="match status" value="1"/>
</dbReference>
<dbReference type="NCBIfam" id="NF001750">
    <property type="entry name" value="PRK00476.1"/>
    <property type="match status" value="1"/>
</dbReference>
<dbReference type="PANTHER" id="PTHR22594:SF5">
    <property type="entry name" value="ASPARTATE--TRNA LIGASE, MITOCHONDRIAL"/>
    <property type="match status" value="1"/>
</dbReference>
<dbReference type="PANTHER" id="PTHR22594">
    <property type="entry name" value="ASPARTYL/LYSYL-TRNA SYNTHETASE"/>
    <property type="match status" value="1"/>
</dbReference>
<dbReference type="Pfam" id="PF02938">
    <property type="entry name" value="GAD"/>
    <property type="match status" value="1"/>
</dbReference>
<dbReference type="Pfam" id="PF00152">
    <property type="entry name" value="tRNA-synt_2"/>
    <property type="match status" value="1"/>
</dbReference>
<dbReference type="Pfam" id="PF01336">
    <property type="entry name" value="tRNA_anti-codon"/>
    <property type="match status" value="1"/>
</dbReference>
<dbReference type="PRINTS" id="PR01042">
    <property type="entry name" value="TRNASYNTHASP"/>
</dbReference>
<dbReference type="SUPFAM" id="SSF55681">
    <property type="entry name" value="Class II aaRS and biotin synthetases"/>
    <property type="match status" value="1"/>
</dbReference>
<dbReference type="SUPFAM" id="SSF55261">
    <property type="entry name" value="GAD domain-like"/>
    <property type="match status" value="1"/>
</dbReference>
<dbReference type="SUPFAM" id="SSF50249">
    <property type="entry name" value="Nucleic acid-binding proteins"/>
    <property type="match status" value="1"/>
</dbReference>
<dbReference type="PROSITE" id="PS50862">
    <property type="entry name" value="AA_TRNA_LIGASE_II"/>
    <property type="match status" value="1"/>
</dbReference>
<proteinExistence type="inferred from homology"/>
<reference key="1">
    <citation type="journal article" date="2011" name="Stand. Genomic Sci.">
        <title>Complete genome sequence of Parvibaculum lavamentivorans type strain (DS-1(T)).</title>
        <authorList>
            <person name="Schleheck D."/>
            <person name="Weiss M."/>
            <person name="Pitluck S."/>
            <person name="Bruce D."/>
            <person name="Land M.L."/>
            <person name="Han S."/>
            <person name="Saunders E."/>
            <person name="Tapia R."/>
            <person name="Detter C."/>
            <person name="Brettin T."/>
            <person name="Han J."/>
            <person name="Woyke T."/>
            <person name="Goodwin L."/>
            <person name="Pennacchio L."/>
            <person name="Nolan M."/>
            <person name="Cook A.M."/>
            <person name="Kjelleberg S."/>
            <person name="Thomas T."/>
        </authorList>
    </citation>
    <scope>NUCLEOTIDE SEQUENCE [LARGE SCALE GENOMIC DNA]</scope>
    <source>
        <strain>DS-1 / DSM 13023 / NCIMB 13966</strain>
    </source>
</reference>
<gene>
    <name evidence="1" type="primary">aspS</name>
    <name type="ordered locus">Plav_3302</name>
</gene>
<keyword id="KW-0030">Aminoacyl-tRNA synthetase</keyword>
<keyword id="KW-0067">ATP-binding</keyword>
<keyword id="KW-0963">Cytoplasm</keyword>
<keyword id="KW-0436">Ligase</keyword>
<keyword id="KW-0547">Nucleotide-binding</keyword>
<keyword id="KW-0648">Protein biosynthesis</keyword>
<keyword id="KW-1185">Reference proteome</keyword>
<name>SYDND_PARL1</name>
<sequence length="607" mass="67954">MSSFRSHTSGELRKSHVGETVRLAGWVHRKRDHGGLLFIDLRDNYGLTQLVFDPDRAEAFALAEKLRAEYVVAIEGKVVARSAETINANLPTGDIEIAVSSMEVLSEAQDLPLPVFGEPDYPEDIRLTYRFLDLRRETLHRNILLRSKIIADIRRRMTEVGFNEFQTPILTASSPEGARDFLVPSRMHPGKFYALPQAPQQFKQLIMVAGFDRYFQIAPCFRDEDARADRSPGEFYQLDVEMSFVTQDDVFAAIEPVLHGLFEKFAEGKKVSSYPFTRIPYAEAIRKYGSDKPDLRNPIVMESVTDHFRGSGFKVFAGLIEKDSKVEVWAIPAPGGGNRAFCDRMNSWAQGEGQPGLGYIFFREEGGALEGAGPVAKNIGPERTEAIRTQLGLKAGDAVFFVAGVPAKTASFAGLARTRVGTELGLIEEDIFKFCWIVDFPMFEWNEDEKKIDFSHNPFSMPNYPLDKFLKLDKDNADEILGMTAFQYDIVCNGVELSSGAIRNHKPDVMYKAFEIAGYDKSVVETKFGGMLNAFKYGAPPHGGLAPGIDRMVMLLAGVENLREVTMFPMNQQAQDLLMQAPSEVEPKQLKELHIRVVPPLEKKKEG</sequence>
<accession>A7HYC4</accession>
<feature type="chain" id="PRO_1000071086" description="Aspartate--tRNA(Asp/Asn) ligase">
    <location>
        <begin position="1"/>
        <end position="607"/>
    </location>
</feature>
<feature type="region of interest" description="Aspartate" evidence="1">
    <location>
        <begin position="200"/>
        <end position="203"/>
    </location>
</feature>
<feature type="binding site" evidence="1">
    <location>
        <position position="176"/>
    </location>
    <ligand>
        <name>L-aspartate</name>
        <dbReference type="ChEBI" id="CHEBI:29991"/>
    </ligand>
</feature>
<feature type="binding site" evidence="1">
    <location>
        <begin position="222"/>
        <end position="224"/>
    </location>
    <ligand>
        <name>ATP</name>
        <dbReference type="ChEBI" id="CHEBI:30616"/>
    </ligand>
</feature>
<feature type="binding site" evidence="1">
    <location>
        <position position="222"/>
    </location>
    <ligand>
        <name>L-aspartate</name>
        <dbReference type="ChEBI" id="CHEBI:29991"/>
    </ligand>
</feature>
<feature type="binding site" evidence="1">
    <location>
        <position position="456"/>
    </location>
    <ligand>
        <name>L-aspartate</name>
        <dbReference type="ChEBI" id="CHEBI:29991"/>
    </ligand>
</feature>
<feature type="binding site" evidence="1">
    <location>
        <position position="496"/>
    </location>
    <ligand>
        <name>ATP</name>
        <dbReference type="ChEBI" id="CHEBI:30616"/>
    </ligand>
</feature>
<feature type="binding site" evidence="1">
    <location>
        <position position="503"/>
    </location>
    <ligand>
        <name>L-aspartate</name>
        <dbReference type="ChEBI" id="CHEBI:29991"/>
    </ligand>
</feature>
<feature type="binding site" evidence="1">
    <location>
        <begin position="548"/>
        <end position="551"/>
    </location>
    <ligand>
        <name>ATP</name>
        <dbReference type="ChEBI" id="CHEBI:30616"/>
    </ligand>
</feature>
<feature type="site" description="Important for tRNA non-discrimination" evidence="1">
    <location>
        <position position="33"/>
    </location>
</feature>
<organism>
    <name type="scientific">Parvibaculum lavamentivorans (strain DS-1 / DSM 13023 / NCIMB 13966)</name>
    <dbReference type="NCBI Taxonomy" id="402881"/>
    <lineage>
        <taxon>Bacteria</taxon>
        <taxon>Pseudomonadati</taxon>
        <taxon>Pseudomonadota</taxon>
        <taxon>Alphaproteobacteria</taxon>
        <taxon>Hyphomicrobiales</taxon>
        <taxon>Parvibaculaceae</taxon>
        <taxon>Parvibaculum</taxon>
    </lineage>
</organism>